<accession>V9QEI7</accession>
<accession>V9QES2</accession>
<accession>V9QFG5</accession>
<proteinExistence type="inferred from homology"/>
<organism>
    <name type="scientific">Latrodectus hesperus</name>
    <name type="common">Western black widow spider</name>
    <dbReference type="NCBI Taxonomy" id="256737"/>
    <lineage>
        <taxon>Eukaryota</taxon>
        <taxon>Metazoa</taxon>
        <taxon>Ecdysozoa</taxon>
        <taxon>Arthropoda</taxon>
        <taxon>Chelicerata</taxon>
        <taxon>Arachnida</taxon>
        <taxon>Araneae</taxon>
        <taxon>Araneomorphae</taxon>
        <taxon>Entelegynae</taxon>
        <taxon>Araneoidea</taxon>
        <taxon>Theridiidae</taxon>
        <taxon>Latrodectus</taxon>
    </lineage>
</organism>
<feature type="signal peptide" evidence="3">
    <location>
        <begin position="1"/>
        <end position="19"/>
    </location>
</feature>
<feature type="chain" id="PRO_0000432880" description="Alpha-latrotoxin associated low molecular weight protein 2">
    <location>
        <begin position="20"/>
        <end position="88"/>
    </location>
</feature>
<feature type="disulfide bond" evidence="1">
    <location>
        <begin position="30"/>
        <end position="66"/>
    </location>
</feature>
<feature type="disulfide bond" evidence="1">
    <location>
        <begin position="46"/>
        <end position="62"/>
    </location>
</feature>
<feature type="disulfide bond" evidence="1">
    <location>
        <begin position="49"/>
        <end position="75"/>
    </location>
</feature>
<feature type="sequence conflict" description="In Ref. 1; AHC13255/AHC13256." evidence="5" ref="1">
    <original>D</original>
    <variation>E</variation>
    <location>
        <position position="38"/>
    </location>
</feature>
<feature type="sequence conflict" description="In Ref. 1; AHC13271." evidence="5" ref="1">
    <original>F</original>
    <variation>P</variation>
    <location>
        <position position="72"/>
    </location>
</feature>
<keyword id="KW-1015">Disulfide bond</keyword>
<keyword id="KW-0873">Pyrrolidone carboxylic acid</keyword>
<keyword id="KW-0964">Secreted</keyword>
<keyword id="KW-0732">Signal</keyword>
<reference key="1">
    <citation type="journal article" date="2014" name="Gene">
        <title>Recruitment and diversification of an ecdysozoan family of neuropeptide hormones for black widow spider venom expression.</title>
        <authorList>
            <person name="McCowan C."/>
            <person name="Garb J.E."/>
        </authorList>
    </citation>
    <scope>NUCLEOTIDE SEQUENCE [GENOMIC DNA / MRNA]</scope>
    <source>
        <tissue>Venom gland</tissue>
    </source>
</reference>
<sequence>MLKLICIAFLVTVLTLVAGEDSLDPAEYGCADDINQEDLLKKNDVCLQCEDLHKEGVVFSLCKTNCFTTQYFTNCVKDLEEAEKEPPE</sequence>
<name>TXA2_LATHE</name>
<dbReference type="EMBL" id="KF751509">
    <property type="protein sequence ID" value="AHC13254.1"/>
    <property type="molecule type" value="mRNA"/>
</dbReference>
<dbReference type="EMBL" id="KF751510">
    <property type="protein sequence ID" value="AHC13255.1"/>
    <property type="molecule type" value="mRNA"/>
</dbReference>
<dbReference type="EMBL" id="KF751511">
    <property type="protein sequence ID" value="AHC13256.1"/>
    <property type="molecule type" value="mRNA"/>
</dbReference>
<dbReference type="EMBL" id="KF751526">
    <property type="protein sequence ID" value="AHC13271.1"/>
    <property type="molecule type" value="Genomic_DNA"/>
</dbReference>
<dbReference type="SMR" id="V9QEI7"/>
<dbReference type="GO" id="GO:0005576">
    <property type="term" value="C:extracellular region"/>
    <property type="evidence" value="ECO:0007669"/>
    <property type="project" value="UniProtKB-SubCell"/>
</dbReference>
<dbReference type="GO" id="GO:0005184">
    <property type="term" value="F:neuropeptide hormone activity"/>
    <property type="evidence" value="ECO:0007669"/>
    <property type="project" value="InterPro"/>
</dbReference>
<dbReference type="Gene3D" id="1.10.2010.10">
    <property type="entry name" value="Crustacean CHH/MIH/GIH neurohormone"/>
    <property type="match status" value="1"/>
</dbReference>
<dbReference type="InterPro" id="IPR018251">
    <property type="entry name" value="Crust_neurhormone_CS"/>
</dbReference>
<dbReference type="InterPro" id="IPR031098">
    <property type="entry name" value="Crust_neurohorm"/>
</dbReference>
<dbReference type="InterPro" id="IPR035957">
    <property type="entry name" value="Crust_neurohorm_sf"/>
</dbReference>
<dbReference type="Pfam" id="PF01147">
    <property type="entry name" value="Crust_neurohorm"/>
    <property type="match status" value="1"/>
</dbReference>
<dbReference type="SUPFAM" id="SSF81778">
    <property type="entry name" value="Crustacean CHH/MIH/GIH neurohormone"/>
    <property type="match status" value="1"/>
</dbReference>
<dbReference type="PROSITE" id="PS01250">
    <property type="entry name" value="CHH_MIH_GIH"/>
    <property type="match status" value="1"/>
</dbReference>
<protein>
    <recommendedName>
        <fullName evidence="2">Alpha-latrotoxin associated low molecular weight protein 2</fullName>
        <shortName evidence="2">Alpha-latrotoxin-associated LMWP2</shortName>
    </recommendedName>
    <alternativeName>
        <fullName evidence="4">Latrodectin-2</fullName>
    </alternativeName>
</protein>
<comment type="function">
    <text evidence="2">May increase the toxicity of alpha-latrotoxin and/or other venom components. Is non-toxic to mice and to the cockroach Periplaneta americana.</text>
</comment>
<comment type="subcellular location">
    <subcellularLocation>
        <location evidence="2">Secreted</location>
    </subcellularLocation>
</comment>
<comment type="tissue specificity">
    <text evidence="5">Expressed by the venom gland.</text>
</comment>
<comment type="miscellaneous">
    <text evidence="2">Co-purifies with latroinsectotoxin.</text>
</comment>
<comment type="similarity">
    <text evidence="6">Belongs to the arthropod CHH/MIH/GIH/VIH hormone family.</text>
</comment>
<evidence type="ECO:0000250" key="1">
    <source>
        <dbReference type="UniProtKB" id="P55847"/>
    </source>
</evidence>
<evidence type="ECO:0000250" key="2">
    <source>
        <dbReference type="UniProtKB" id="Q4U4N3"/>
    </source>
</evidence>
<evidence type="ECO:0000255" key="3"/>
<evidence type="ECO:0000303" key="4">
    <source>
    </source>
</evidence>
<evidence type="ECO:0000305" key="5"/>
<evidence type="ECO:0000305" key="6">
    <source>
    </source>
</evidence>